<proteinExistence type="inferred from homology"/>
<organism>
    <name type="scientific">Bartonella quintana (strain Toulouse)</name>
    <name type="common">Rochalimaea quintana</name>
    <dbReference type="NCBI Taxonomy" id="283165"/>
    <lineage>
        <taxon>Bacteria</taxon>
        <taxon>Pseudomonadati</taxon>
        <taxon>Pseudomonadota</taxon>
        <taxon>Alphaproteobacteria</taxon>
        <taxon>Hyphomicrobiales</taxon>
        <taxon>Bartonellaceae</taxon>
        <taxon>Bartonella</taxon>
    </lineage>
</organism>
<dbReference type="EC" id="6.1.1.23" evidence="1"/>
<dbReference type="EMBL" id="BX897700">
    <property type="protein sequence ID" value="CAF26239.1"/>
    <property type="molecule type" value="Genomic_DNA"/>
</dbReference>
<dbReference type="RefSeq" id="WP_011179491.1">
    <property type="nucleotide sequence ID" value="NC_005955.1"/>
</dbReference>
<dbReference type="SMR" id="Q6FZI4"/>
<dbReference type="KEGG" id="bqu:BQ07550"/>
<dbReference type="eggNOG" id="COG0173">
    <property type="taxonomic scope" value="Bacteria"/>
</dbReference>
<dbReference type="HOGENOM" id="CLU_014330_3_2_5"/>
<dbReference type="OrthoDB" id="9802326at2"/>
<dbReference type="Proteomes" id="UP000000597">
    <property type="component" value="Chromosome"/>
</dbReference>
<dbReference type="GO" id="GO:0005737">
    <property type="term" value="C:cytoplasm"/>
    <property type="evidence" value="ECO:0007669"/>
    <property type="project" value="UniProtKB-SubCell"/>
</dbReference>
<dbReference type="GO" id="GO:0004815">
    <property type="term" value="F:aspartate-tRNA ligase activity"/>
    <property type="evidence" value="ECO:0007669"/>
    <property type="project" value="UniProtKB-UniRule"/>
</dbReference>
<dbReference type="GO" id="GO:0050560">
    <property type="term" value="F:aspartate-tRNA(Asn) ligase activity"/>
    <property type="evidence" value="ECO:0007669"/>
    <property type="project" value="UniProtKB-EC"/>
</dbReference>
<dbReference type="GO" id="GO:0005524">
    <property type="term" value="F:ATP binding"/>
    <property type="evidence" value="ECO:0007669"/>
    <property type="project" value="UniProtKB-UniRule"/>
</dbReference>
<dbReference type="GO" id="GO:0003676">
    <property type="term" value="F:nucleic acid binding"/>
    <property type="evidence" value="ECO:0007669"/>
    <property type="project" value="InterPro"/>
</dbReference>
<dbReference type="GO" id="GO:0006422">
    <property type="term" value="P:aspartyl-tRNA aminoacylation"/>
    <property type="evidence" value="ECO:0007669"/>
    <property type="project" value="UniProtKB-UniRule"/>
</dbReference>
<dbReference type="CDD" id="cd00777">
    <property type="entry name" value="AspRS_core"/>
    <property type="match status" value="1"/>
</dbReference>
<dbReference type="CDD" id="cd04317">
    <property type="entry name" value="EcAspRS_like_N"/>
    <property type="match status" value="1"/>
</dbReference>
<dbReference type="Gene3D" id="3.30.930.10">
    <property type="entry name" value="Bira Bifunctional Protein, Domain 2"/>
    <property type="match status" value="1"/>
</dbReference>
<dbReference type="Gene3D" id="3.30.1360.30">
    <property type="entry name" value="GAD-like domain"/>
    <property type="match status" value="1"/>
</dbReference>
<dbReference type="Gene3D" id="2.40.50.140">
    <property type="entry name" value="Nucleic acid-binding proteins"/>
    <property type="match status" value="1"/>
</dbReference>
<dbReference type="HAMAP" id="MF_00044">
    <property type="entry name" value="Asp_tRNA_synth_type1"/>
    <property type="match status" value="1"/>
</dbReference>
<dbReference type="InterPro" id="IPR004364">
    <property type="entry name" value="Aa-tRNA-synt_II"/>
</dbReference>
<dbReference type="InterPro" id="IPR006195">
    <property type="entry name" value="aa-tRNA-synth_II"/>
</dbReference>
<dbReference type="InterPro" id="IPR045864">
    <property type="entry name" value="aa-tRNA-synth_II/BPL/LPL"/>
</dbReference>
<dbReference type="InterPro" id="IPR004524">
    <property type="entry name" value="Asp-tRNA-ligase_1"/>
</dbReference>
<dbReference type="InterPro" id="IPR047089">
    <property type="entry name" value="Asp-tRNA-ligase_1_N"/>
</dbReference>
<dbReference type="InterPro" id="IPR002312">
    <property type="entry name" value="Asp/Asn-tRNA-synth_IIb"/>
</dbReference>
<dbReference type="InterPro" id="IPR047090">
    <property type="entry name" value="AspRS_core"/>
</dbReference>
<dbReference type="InterPro" id="IPR004115">
    <property type="entry name" value="GAD-like_sf"/>
</dbReference>
<dbReference type="InterPro" id="IPR029351">
    <property type="entry name" value="GAD_dom"/>
</dbReference>
<dbReference type="InterPro" id="IPR012340">
    <property type="entry name" value="NA-bd_OB-fold"/>
</dbReference>
<dbReference type="InterPro" id="IPR004365">
    <property type="entry name" value="NA-bd_OB_tRNA"/>
</dbReference>
<dbReference type="NCBIfam" id="TIGR00459">
    <property type="entry name" value="aspS_bact"/>
    <property type="match status" value="1"/>
</dbReference>
<dbReference type="NCBIfam" id="NF001750">
    <property type="entry name" value="PRK00476.1"/>
    <property type="match status" value="1"/>
</dbReference>
<dbReference type="PANTHER" id="PTHR22594:SF5">
    <property type="entry name" value="ASPARTATE--TRNA LIGASE, MITOCHONDRIAL"/>
    <property type="match status" value="1"/>
</dbReference>
<dbReference type="PANTHER" id="PTHR22594">
    <property type="entry name" value="ASPARTYL/LYSYL-TRNA SYNTHETASE"/>
    <property type="match status" value="1"/>
</dbReference>
<dbReference type="Pfam" id="PF02938">
    <property type="entry name" value="GAD"/>
    <property type="match status" value="1"/>
</dbReference>
<dbReference type="Pfam" id="PF00152">
    <property type="entry name" value="tRNA-synt_2"/>
    <property type="match status" value="1"/>
</dbReference>
<dbReference type="Pfam" id="PF01336">
    <property type="entry name" value="tRNA_anti-codon"/>
    <property type="match status" value="1"/>
</dbReference>
<dbReference type="PRINTS" id="PR01042">
    <property type="entry name" value="TRNASYNTHASP"/>
</dbReference>
<dbReference type="SUPFAM" id="SSF55681">
    <property type="entry name" value="Class II aaRS and biotin synthetases"/>
    <property type="match status" value="1"/>
</dbReference>
<dbReference type="SUPFAM" id="SSF55261">
    <property type="entry name" value="GAD domain-like"/>
    <property type="match status" value="1"/>
</dbReference>
<dbReference type="SUPFAM" id="SSF50249">
    <property type="entry name" value="Nucleic acid-binding proteins"/>
    <property type="match status" value="1"/>
</dbReference>
<dbReference type="PROSITE" id="PS50862">
    <property type="entry name" value="AA_TRNA_LIGASE_II"/>
    <property type="match status" value="1"/>
</dbReference>
<name>SYDND_BARQU</name>
<evidence type="ECO:0000255" key="1">
    <source>
        <dbReference type="HAMAP-Rule" id="MF_00044"/>
    </source>
</evidence>
<gene>
    <name evidence="1" type="primary">aspS</name>
    <name type="ordered locus">BQ07550</name>
</gene>
<feature type="chain" id="PRO_0000110832" description="Aspartate--tRNA(Asp/Asn) ligase">
    <location>
        <begin position="1"/>
        <end position="597"/>
    </location>
</feature>
<feature type="region of interest" description="Aspartate" evidence="1">
    <location>
        <begin position="199"/>
        <end position="202"/>
    </location>
</feature>
<feature type="binding site" evidence="1">
    <location>
        <position position="175"/>
    </location>
    <ligand>
        <name>L-aspartate</name>
        <dbReference type="ChEBI" id="CHEBI:29991"/>
    </ligand>
</feature>
<feature type="binding site" evidence="1">
    <location>
        <begin position="221"/>
        <end position="223"/>
    </location>
    <ligand>
        <name>ATP</name>
        <dbReference type="ChEBI" id="CHEBI:30616"/>
    </ligand>
</feature>
<feature type="binding site" evidence="1">
    <location>
        <position position="221"/>
    </location>
    <ligand>
        <name>L-aspartate</name>
        <dbReference type="ChEBI" id="CHEBI:29991"/>
    </ligand>
</feature>
<feature type="binding site" evidence="1">
    <location>
        <position position="454"/>
    </location>
    <ligand>
        <name>L-aspartate</name>
        <dbReference type="ChEBI" id="CHEBI:29991"/>
    </ligand>
</feature>
<feature type="binding site" evidence="1">
    <location>
        <position position="488"/>
    </location>
    <ligand>
        <name>ATP</name>
        <dbReference type="ChEBI" id="CHEBI:30616"/>
    </ligand>
</feature>
<feature type="binding site" evidence="1">
    <location>
        <position position="495"/>
    </location>
    <ligand>
        <name>L-aspartate</name>
        <dbReference type="ChEBI" id="CHEBI:29991"/>
    </ligand>
</feature>
<feature type="binding site" evidence="1">
    <location>
        <begin position="540"/>
        <end position="543"/>
    </location>
    <ligand>
        <name>ATP</name>
        <dbReference type="ChEBI" id="CHEBI:30616"/>
    </ligand>
</feature>
<feature type="site" description="Important for tRNA non-discrimination" evidence="1">
    <location>
        <position position="33"/>
    </location>
</feature>
<sequence>MHRYRSHNCAALRKHDVGKHVRLSGWVHRVRDHGGILFVDLRDHFGITQIVANPASPAFEIIEKVRSEWVIRVDGEVCARSDEVINTVLPTGEIEIFVKEVEILSKSDELPLPVFGEPDYPEDIRLKYRFLDLRRETMHKNIMRRTEIITAIRRSMQNNGFTEFTTPLLTASSPEGARDFLVPSRIHQGKFYALPQAPQQYKQLLMMSGFDRYFQIAPCFRDEDPRADRLPGEFYQLDVEMSFVEQEDVFVTMEPIMRSIFEEFANGKPVTQNFPRISYDEAIKKYGSDKPDLRNPIIMQDVSQHFYDSCFKIFAQILTNDENAQVWAIPAKTGGSRAFCDRMNLWAQSEGQPGLGYIFWREEEGKFEGAGPIAKNIGEQRTEALRIQLGLESGDACFFIAGNPKKFSTFAGAVRTRIGEELDLIDRECFSLAWIVDFPFFEWNEDEKKLDFAHNPFSMPQGGKNALECQDPLTLKAFQYDLVCNGYEIASGGIRNHSPEMMLKVFNLAGLSREVVEDRFGALYRAFHYGAPPHGGMAAGVDRIIMLLQGVKNLREIALFPMNQQALDLLMSAPSDVSSAQLRDLGIRVAPAAKNGS</sequence>
<comment type="function">
    <text evidence="1">Aspartyl-tRNA synthetase with relaxed tRNA specificity since it is able to aspartylate not only its cognate tRNA(Asp) but also tRNA(Asn). Reaction proceeds in two steps: L-aspartate is first activated by ATP to form Asp-AMP and then transferred to the acceptor end of tRNA(Asp/Asn).</text>
</comment>
<comment type="catalytic activity">
    <reaction evidence="1">
        <text>tRNA(Asx) + L-aspartate + ATP = L-aspartyl-tRNA(Asx) + AMP + diphosphate</text>
        <dbReference type="Rhea" id="RHEA:18349"/>
        <dbReference type="Rhea" id="RHEA-COMP:9710"/>
        <dbReference type="Rhea" id="RHEA-COMP:9711"/>
        <dbReference type="ChEBI" id="CHEBI:29991"/>
        <dbReference type="ChEBI" id="CHEBI:30616"/>
        <dbReference type="ChEBI" id="CHEBI:33019"/>
        <dbReference type="ChEBI" id="CHEBI:78442"/>
        <dbReference type="ChEBI" id="CHEBI:78516"/>
        <dbReference type="ChEBI" id="CHEBI:456215"/>
        <dbReference type="EC" id="6.1.1.23"/>
    </reaction>
</comment>
<comment type="subunit">
    <text evidence="1">Homodimer.</text>
</comment>
<comment type="subcellular location">
    <subcellularLocation>
        <location evidence="1">Cytoplasm</location>
    </subcellularLocation>
</comment>
<comment type="similarity">
    <text evidence="1">Belongs to the class-II aminoacyl-tRNA synthetase family. Type 1 subfamily.</text>
</comment>
<accession>Q6FZI4</accession>
<reference key="1">
    <citation type="journal article" date="2004" name="Proc. Natl. Acad. Sci. U.S.A.">
        <title>The louse-borne human pathogen Bartonella quintana is a genomic derivative of the zoonotic agent Bartonella henselae.</title>
        <authorList>
            <person name="Alsmark U.C.M."/>
            <person name="Frank A.C."/>
            <person name="Karlberg E.O."/>
            <person name="Legault B.-A."/>
            <person name="Ardell D.H."/>
            <person name="Canbaeck B."/>
            <person name="Eriksson A.-S."/>
            <person name="Naeslund A.K."/>
            <person name="Handley S.A."/>
            <person name="Huvet M."/>
            <person name="La Scola B."/>
            <person name="Holmberg M."/>
            <person name="Andersson S.G.E."/>
        </authorList>
    </citation>
    <scope>NUCLEOTIDE SEQUENCE [LARGE SCALE GENOMIC DNA]</scope>
    <source>
        <strain>Toulouse</strain>
    </source>
</reference>
<keyword id="KW-0030">Aminoacyl-tRNA synthetase</keyword>
<keyword id="KW-0067">ATP-binding</keyword>
<keyword id="KW-0963">Cytoplasm</keyword>
<keyword id="KW-0436">Ligase</keyword>
<keyword id="KW-0547">Nucleotide-binding</keyword>
<keyword id="KW-0648">Protein biosynthesis</keyword>
<protein>
    <recommendedName>
        <fullName evidence="1">Aspartate--tRNA(Asp/Asn) ligase</fullName>
        <ecNumber evidence="1">6.1.1.23</ecNumber>
    </recommendedName>
    <alternativeName>
        <fullName evidence="1">Aspartyl-tRNA synthetase</fullName>
        <shortName evidence="1">AspRS</shortName>
    </alternativeName>
    <alternativeName>
        <fullName evidence="1">Non-discriminating aspartyl-tRNA synthetase</fullName>
        <shortName evidence="1">ND-AspRS</shortName>
    </alternativeName>
</protein>